<feature type="chain" id="PRO_1000019421" description="Cysteine desulfurase IscS">
    <location>
        <begin position="1"/>
        <end position="404"/>
    </location>
</feature>
<feature type="active site" description="Cysteine persulfide intermediate" evidence="1">
    <location>
        <position position="328"/>
    </location>
</feature>
<feature type="binding site" evidence="1">
    <location>
        <begin position="75"/>
        <end position="76"/>
    </location>
    <ligand>
        <name>pyridoxal 5'-phosphate</name>
        <dbReference type="ChEBI" id="CHEBI:597326"/>
    </ligand>
</feature>
<feature type="binding site" evidence="1">
    <location>
        <position position="155"/>
    </location>
    <ligand>
        <name>pyridoxal 5'-phosphate</name>
        <dbReference type="ChEBI" id="CHEBI:597326"/>
    </ligand>
</feature>
<feature type="binding site" evidence="1">
    <location>
        <position position="183"/>
    </location>
    <ligand>
        <name>pyridoxal 5'-phosphate</name>
        <dbReference type="ChEBI" id="CHEBI:597326"/>
    </ligand>
</feature>
<feature type="binding site" evidence="1">
    <location>
        <begin position="203"/>
        <end position="205"/>
    </location>
    <ligand>
        <name>pyridoxal 5'-phosphate</name>
        <dbReference type="ChEBI" id="CHEBI:597326"/>
    </ligand>
</feature>
<feature type="binding site" evidence="1">
    <location>
        <position position="243"/>
    </location>
    <ligand>
        <name>pyridoxal 5'-phosphate</name>
        <dbReference type="ChEBI" id="CHEBI:597326"/>
    </ligand>
</feature>
<feature type="binding site" description="via persulfide group" evidence="1">
    <location>
        <position position="328"/>
    </location>
    <ligand>
        <name>[2Fe-2S] cluster</name>
        <dbReference type="ChEBI" id="CHEBI:190135"/>
        <note>ligand shared with IscU</note>
    </ligand>
</feature>
<feature type="modified residue" description="N6-(pyridoxal phosphate)lysine" evidence="1">
    <location>
        <position position="206"/>
    </location>
</feature>
<dbReference type="EC" id="2.8.1.7" evidence="1"/>
<dbReference type="EMBL" id="CP000058">
    <property type="protein sequence ID" value="AAZ37309.1"/>
    <property type="molecule type" value="Genomic_DNA"/>
</dbReference>
<dbReference type="RefSeq" id="WP_003365095.1">
    <property type="nucleotide sequence ID" value="NC_005773.3"/>
</dbReference>
<dbReference type="SMR" id="Q48M05"/>
<dbReference type="KEGG" id="psp:PSPPH_1309"/>
<dbReference type="eggNOG" id="COG1104">
    <property type="taxonomic scope" value="Bacteria"/>
</dbReference>
<dbReference type="HOGENOM" id="CLU_003433_0_2_6"/>
<dbReference type="UniPathway" id="UPA00266"/>
<dbReference type="Proteomes" id="UP000000551">
    <property type="component" value="Chromosome"/>
</dbReference>
<dbReference type="GO" id="GO:1990221">
    <property type="term" value="C:L-cysteine desulfurase complex"/>
    <property type="evidence" value="ECO:0007669"/>
    <property type="project" value="UniProtKB-ARBA"/>
</dbReference>
<dbReference type="GO" id="GO:0051537">
    <property type="term" value="F:2 iron, 2 sulfur cluster binding"/>
    <property type="evidence" value="ECO:0007669"/>
    <property type="project" value="UniProtKB-UniRule"/>
</dbReference>
<dbReference type="GO" id="GO:0031071">
    <property type="term" value="F:cysteine desulfurase activity"/>
    <property type="evidence" value="ECO:0007669"/>
    <property type="project" value="UniProtKB-UniRule"/>
</dbReference>
<dbReference type="GO" id="GO:0046872">
    <property type="term" value="F:metal ion binding"/>
    <property type="evidence" value="ECO:0007669"/>
    <property type="project" value="UniProtKB-KW"/>
</dbReference>
<dbReference type="GO" id="GO:0030170">
    <property type="term" value="F:pyridoxal phosphate binding"/>
    <property type="evidence" value="ECO:0007669"/>
    <property type="project" value="UniProtKB-UniRule"/>
</dbReference>
<dbReference type="GO" id="GO:0044571">
    <property type="term" value="P:[2Fe-2S] cluster assembly"/>
    <property type="evidence" value="ECO:0007669"/>
    <property type="project" value="UniProtKB-UniRule"/>
</dbReference>
<dbReference type="FunFam" id="3.40.640.10:FF:000003">
    <property type="entry name" value="Cysteine desulfurase IscS"/>
    <property type="match status" value="1"/>
</dbReference>
<dbReference type="FunFam" id="3.90.1150.10:FF:000002">
    <property type="entry name" value="Cysteine desulfurase IscS"/>
    <property type="match status" value="1"/>
</dbReference>
<dbReference type="Gene3D" id="3.90.1150.10">
    <property type="entry name" value="Aspartate Aminotransferase, domain 1"/>
    <property type="match status" value="1"/>
</dbReference>
<dbReference type="Gene3D" id="3.40.640.10">
    <property type="entry name" value="Type I PLP-dependent aspartate aminotransferase-like (Major domain)"/>
    <property type="match status" value="1"/>
</dbReference>
<dbReference type="HAMAP" id="MF_00331">
    <property type="entry name" value="Cys_desulf_IscS"/>
    <property type="match status" value="1"/>
</dbReference>
<dbReference type="InterPro" id="IPR000192">
    <property type="entry name" value="Aminotrans_V_dom"/>
</dbReference>
<dbReference type="InterPro" id="IPR020578">
    <property type="entry name" value="Aminotrans_V_PyrdxlP_BS"/>
</dbReference>
<dbReference type="InterPro" id="IPR010240">
    <property type="entry name" value="Cys_deSase_IscS"/>
</dbReference>
<dbReference type="InterPro" id="IPR016454">
    <property type="entry name" value="Cysteine_dSase"/>
</dbReference>
<dbReference type="InterPro" id="IPR015424">
    <property type="entry name" value="PyrdxlP-dep_Trfase"/>
</dbReference>
<dbReference type="InterPro" id="IPR015421">
    <property type="entry name" value="PyrdxlP-dep_Trfase_major"/>
</dbReference>
<dbReference type="InterPro" id="IPR015422">
    <property type="entry name" value="PyrdxlP-dep_Trfase_small"/>
</dbReference>
<dbReference type="NCBIfam" id="TIGR02006">
    <property type="entry name" value="IscS"/>
    <property type="match status" value="1"/>
</dbReference>
<dbReference type="NCBIfam" id="NF010611">
    <property type="entry name" value="PRK14012.1"/>
    <property type="match status" value="1"/>
</dbReference>
<dbReference type="PANTHER" id="PTHR11601:SF34">
    <property type="entry name" value="CYSTEINE DESULFURASE"/>
    <property type="match status" value="1"/>
</dbReference>
<dbReference type="PANTHER" id="PTHR11601">
    <property type="entry name" value="CYSTEINE DESULFURYLASE FAMILY MEMBER"/>
    <property type="match status" value="1"/>
</dbReference>
<dbReference type="Pfam" id="PF00266">
    <property type="entry name" value="Aminotran_5"/>
    <property type="match status" value="1"/>
</dbReference>
<dbReference type="PIRSF" id="PIRSF005572">
    <property type="entry name" value="NifS"/>
    <property type="match status" value="1"/>
</dbReference>
<dbReference type="SUPFAM" id="SSF53383">
    <property type="entry name" value="PLP-dependent transferases"/>
    <property type="match status" value="1"/>
</dbReference>
<dbReference type="PROSITE" id="PS00595">
    <property type="entry name" value="AA_TRANSFER_CLASS_5"/>
    <property type="match status" value="1"/>
</dbReference>
<accession>Q48M05</accession>
<proteinExistence type="inferred from homology"/>
<gene>
    <name evidence="1" type="primary">iscS</name>
    <name type="ordered locus">PSPPH_1309</name>
</gene>
<sequence length="404" mass="44452">MKLPIYLDYSATTPVDPRVAQKMIDCLTVEGNFGNPASRSHVFGWKAEEAVENARRQVADLVNADPREIVWTSGATESNNLAIKGVAHFYASKGKHLITSKVEHKAVLDTTRQLEREGFEVTYIEPGEDGLITPAMIEAALRDDTILVSIMHVNNEIGTINDIAAIGELTRSRGVLFHVDGAQSTGKVEIDLASLKVDLMSFSAHKTYGPKGIGALYVSRKPRVRLEATMHGGGHERGMRSGTLATHQIVGMGEAFRIAKEEMAAENVRIKALSDRFFKQVENLEELYVNGSLTARVPHNLNLSFNYVEGESLIMALKDLAVSSGSACTSASLEPSYVLRALGRNDELAHSSIRFTFGRFSTEEEIDYAAQKVCEAVTRLRTLSPLWDMFKDGVDISKIEWAAH</sequence>
<evidence type="ECO:0000255" key="1">
    <source>
        <dbReference type="HAMAP-Rule" id="MF_00331"/>
    </source>
</evidence>
<reference key="1">
    <citation type="journal article" date="2005" name="J. Bacteriol.">
        <title>Whole-genome sequence analysis of Pseudomonas syringae pv. phaseolicola 1448A reveals divergence among pathovars in genes involved in virulence and transposition.</title>
        <authorList>
            <person name="Joardar V."/>
            <person name="Lindeberg M."/>
            <person name="Jackson R.W."/>
            <person name="Selengut J."/>
            <person name="Dodson R."/>
            <person name="Brinkac L.M."/>
            <person name="Daugherty S.C."/>
            <person name="DeBoy R.T."/>
            <person name="Durkin A.S."/>
            <person name="Gwinn Giglio M."/>
            <person name="Madupu R."/>
            <person name="Nelson W.C."/>
            <person name="Rosovitz M.J."/>
            <person name="Sullivan S.A."/>
            <person name="Crabtree J."/>
            <person name="Creasy T."/>
            <person name="Davidsen T.M."/>
            <person name="Haft D.H."/>
            <person name="Zafar N."/>
            <person name="Zhou L."/>
            <person name="Halpin R."/>
            <person name="Holley T."/>
            <person name="Khouri H.M."/>
            <person name="Feldblyum T.V."/>
            <person name="White O."/>
            <person name="Fraser C.M."/>
            <person name="Chatterjee A.K."/>
            <person name="Cartinhour S."/>
            <person name="Schneider D."/>
            <person name="Mansfield J.W."/>
            <person name="Collmer A."/>
            <person name="Buell R."/>
        </authorList>
    </citation>
    <scope>NUCLEOTIDE SEQUENCE [LARGE SCALE GENOMIC DNA]</scope>
    <source>
        <strain>1448A / Race 6</strain>
    </source>
</reference>
<protein>
    <recommendedName>
        <fullName evidence="1">Cysteine desulfurase IscS</fullName>
        <ecNumber evidence="1">2.8.1.7</ecNumber>
    </recommendedName>
</protein>
<name>ISCS_PSE14</name>
<keyword id="KW-0001">2Fe-2S</keyword>
<keyword id="KW-0963">Cytoplasm</keyword>
<keyword id="KW-0408">Iron</keyword>
<keyword id="KW-0411">Iron-sulfur</keyword>
<keyword id="KW-0479">Metal-binding</keyword>
<keyword id="KW-0663">Pyridoxal phosphate</keyword>
<keyword id="KW-0808">Transferase</keyword>
<comment type="function">
    <text evidence="1">Master enzyme that delivers sulfur to a number of partners involved in Fe-S cluster assembly, tRNA modification or cofactor biosynthesis. Catalyzes the removal of elemental sulfur atoms from cysteine to produce alanine. Functions as a sulfur delivery protein for Fe-S cluster synthesis onto IscU, an Fe-S scaffold assembly protein, as well as other S acceptor proteins.</text>
</comment>
<comment type="catalytic activity">
    <reaction evidence="1">
        <text>(sulfur carrier)-H + L-cysteine = (sulfur carrier)-SH + L-alanine</text>
        <dbReference type="Rhea" id="RHEA:43892"/>
        <dbReference type="Rhea" id="RHEA-COMP:14737"/>
        <dbReference type="Rhea" id="RHEA-COMP:14739"/>
        <dbReference type="ChEBI" id="CHEBI:29917"/>
        <dbReference type="ChEBI" id="CHEBI:35235"/>
        <dbReference type="ChEBI" id="CHEBI:57972"/>
        <dbReference type="ChEBI" id="CHEBI:64428"/>
        <dbReference type="EC" id="2.8.1.7"/>
    </reaction>
</comment>
<comment type="cofactor">
    <cofactor evidence="1">
        <name>pyridoxal 5'-phosphate</name>
        <dbReference type="ChEBI" id="CHEBI:597326"/>
    </cofactor>
</comment>
<comment type="pathway">
    <text evidence="1">Cofactor biosynthesis; iron-sulfur cluster biosynthesis.</text>
</comment>
<comment type="subunit">
    <text evidence="1">Homodimer. Forms a heterotetramer with IscU, interacts with other sulfur acceptors.</text>
</comment>
<comment type="subcellular location">
    <subcellularLocation>
        <location evidence="1">Cytoplasm</location>
    </subcellularLocation>
</comment>
<comment type="similarity">
    <text evidence="1">Belongs to the class-V pyridoxal-phosphate-dependent aminotransferase family. NifS/IscS subfamily.</text>
</comment>
<organism>
    <name type="scientific">Pseudomonas savastanoi pv. phaseolicola (strain 1448A / Race 6)</name>
    <name type="common">Pseudomonas syringae pv. phaseolicola (strain 1448A / Race 6)</name>
    <dbReference type="NCBI Taxonomy" id="264730"/>
    <lineage>
        <taxon>Bacteria</taxon>
        <taxon>Pseudomonadati</taxon>
        <taxon>Pseudomonadota</taxon>
        <taxon>Gammaproteobacteria</taxon>
        <taxon>Pseudomonadales</taxon>
        <taxon>Pseudomonadaceae</taxon>
        <taxon>Pseudomonas</taxon>
    </lineage>
</organism>